<reference key="1">
    <citation type="journal article" date="1999" name="Cell">
        <title>A striking organization of a large family of human neural cadherin-like cell adhesion genes.</title>
        <authorList>
            <person name="Wu Q."/>
            <person name="Maniatis T."/>
        </authorList>
    </citation>
    <scope>NUCLEOTIDE SEQUENCE [MRNA] (ISOFORMS 1 AND 2)</scope>
    <source>
        <tissue>Brain</tissue>
    </source>
</reference>
<reference key="2">
    <citation type="journal article" date="2004" name="Genome Res.">
        <title>The status, quality, and expansion of the NIH full-length cDNA project: the Mammalian Gene Collection (MGC).</title>
        <authorList>
            <consortium name="The MGC Project Team"/>
        </authorList>
    </citation>
    <scope>NUCLEOTIDE SEQUENCE [LARGE SCALE MRNA] (ISOFORM 1)</scope>
    <source>
        <tissue>Brain</tissue>
    </source>
</reference>
<proteinExistence type="evidence at protein level"/>
<comment type="function">
    <text>Potential calcium-dependent cell-adhesion protein. May be involved in the establishment and maintenance of specific neuronal connections in the brain.</text>
</comment>
<comment type="subcellular location">
    <subcellularLocation>
        <location evidence="1">Cell membrane</location>
        <topology evidence="1">Single-pass type I membrane protein</topology>
    </subcellularLocation>
</comment>
<comment type="alternative products">
    <event type="alternative splicing"/>
    <isoform>
        <id>Q9Y5F8-1</id>
        <name>1</name>
        <sequence type="displayed"/>
    </isoform>
    <isoform>
        <id>Q9Y5F8-2</id>
        <name>2</name>
        <name>Short</name>
        <sequence type="described" ref="VSP_008696 VSP_008697"/>
    </isoform>
</comment>
<accession>Q9Y5F8</accession>
<accession>Q9UN63</accession>
<organism>
    <name type="scientific">Homo sapiens</name>
    <name type="common">Human</name>
    <dbReference type="NCBI Taxonomy" id="9606"/>
    <lineage>
        <taxon>Eukaryota</taxon>
        <taxon>Metazoa</taxon>
        <taxon>Chordata</taxon>
        <taxon>Craniata</taxon>
        <taxon>Vertebrata</taxon>
        <taxon>Euteleostomi</taxon>
        <taxon>Mammalia</taxon>
        <taxon>Eutheria</taxon>
        <taxon>Euarchontoglires</taxon>
        <taxon>Primates</taxon>
        <taxon>Haplorrhini</taxon>
        <taxon>Catarrhini</taxon>
        <taxon>Hominidae</taxon>
        <taxon>Homo</taxon>
    </lineage>
</organism>
<feature type="signal peptide" evidence="2">
    <location>
        <begin position="1"/>
        <end position="30"/>
    </location>
</feature>
<feature type="chain" id="PRO_0000003983" description="Protocadherin gamma-B7">
    <location>
        <begin position="31"/>
        <end position="929"/>
    </location>
</feature>
<feature type="topological domain" description="Extracellular" evidence="2">
    <location>
        <begin position="31"/>
        <end position="691"/>
    </location>
</feature>
<feature type="transmembrane region" description="Helical" evidence="2">
    <location>
        <begin position="692"/>
        <end position="712"/>
    </location>
</feature>
<feature type="topological domain" description="Cytoplasmic" evidence="2">
    <location>
        <begin position="713"/>
        <end position="929"/>
    </location>
</feature>
<feature type="domain" description="Cadherin 1" evidence="3">
    <location>
        <begin position="31"/>
        <end position="133"/>
    </location>
</feature>
<feature type="domain" description="Cadherin 2" evidence="3">
    <location>
        <begin position="134"/>
        <end position="242"/>
    </location>
</feature>
<feature type="domain" description="Cadherin 3" evidence="3">
    <location>
        <begin position="243"/>
        <end position="347"/>
    </location>
</feature>
<feature type="domain" description="Cadherin 4" evidence="3">
    <location>
        <begin position="348"/>
        <end position="452"/>
    </location>
</feature>
<feature type="domain" description="Cadherin 5" evidence="3">
    <location>
        <begin position="453"/>
        <end position="562"/>
    </location>
</feature>
<feature type="domain" description="Cadherin 6" evidence="3">
    <location>
        <begin position="570"/>
        <end position="675"/>
    </location>
</feature>
<feature type="region of interest" description="Disordered" evidence="4">
    <location>
        <begin position="806"/>
        <end position="838"/>
    </location>
</feature>
<feature type="region of interest" description="Disordered" evidence="4">
    <location>
        <begin position="899"/>
        <end position="929"/>
    </location>
</feature>
<feature type="compositionally biased region" description="Polar residues" evidence="4">
    <location>
        <begin position="807"/>
        <end position="838"/>
    </location>
</feature>
<feature type="compositionally biased region" description="Basic residues" evidence="4">
    <location>
        <begin position="919"/>
        <end position="929"/>
    </location>
</feature>
<feature type="glycosylation site" description="N-linked (GlcNAc...) asparagine" evidence="2">
    <location>
        <position position="419"/>
    </location>
</feature>
<feature type="glycosylation site" description="N-linked (GlcNAc...) asparagine" evidence="2">
    <location>
        <position position="545"/>
    </location>
</feature>
<feature type="splice variant" id="VSP_008696" description="In isoform 2." evidence="5">
    <original>QAP</original>
    <variation>VSI</variation>
    <location>
        <begin position="806"/>
        <end position="808"/>
    </location>
</feature>
<feature type="splice variant" id="VSP_008697" description="In isoform 2." evidence="5">
    <location>
        <begin position="809"/>
        <end position="929"/>
    </location>
</feature>
<feature type="sequence variant" id="VAR_048573" description="In dbSNP:rs17208397.">
    <original>V</original>
    <variation>L</variation>
    <location>
        <position position="405"/>
    </location>
</feature>
<keyword id="KW-0025">Alternative splicing</keyword>
<keyword id="KW-0106">Calcium</keyword>
<keyword id="KW-0130">Cell adhesion</keyword>
<keyword id="KW-1003">Cell membrane</keyword>
<keyword id="KW-0325">Glycoprotein</keyword>
<keyword id="KW-0472">Membrane</keyword>
<keyword id="KW-1267">Proteomics identification</keyword>
<keyword id="KW-1185">Reference proteome</keyword>
<keyword id="KW-0677">Repeat</keyword>
<keyword id="KW-0732">Signal</keyword>
<keyword id="KW-0812">Transmembrane</keyword>
<keyword id="KW-1133">Transmembrane helix</keyword>
<sequence>MGGSCAQRRRAGPRQVLFPLLLPLFYPTLCEPIRYSIPEELAKGSVVGNLAKDLGLSVLDVSARELRVSAEKLHFSVDAQSGDLLVKDRIDREQICKERRRCELQLEAVVENPLNIFHVIVVIEDVNDHAPQFRKDEINLEISESVSLGMGTILESAEDPDISMNSLSKYQLSPNEYFSLVEKDNPDGGKYPELVLQKTLDRETQSAHHLVLTALDGGDPPRSGTAQIRILVIDANDNPPVFSQDVYRVSLREDVPPGTSILRVKATDQDEGINSEITYSFFGVADKAQHVFSLDYTTGNILTQQPLDFEEVERYTINIEAKDRGSLSTRCKVIVEVVDENDNSPEIIITSLSDQIMEDSPPGVVVALFKTRDQDSGENGEVRCSLSRGVPFKIHSSSNNYYKLVTDEALDREQTPEYNVTIAATDRGKPPLSSSKTITLHITDVNDNAPVFGQSAYLVHVPENNQPGASIAQVSASDPDFGLNGRVSYSLIASDLESRTLSSYVSVSAQSGVVFAQRAFDHEQLRTFELTLQARDQGSPALSANVSLRVLVGDRNDNAPRVLYPALGPDGSALFDTVPRAAQPGYLVTKVVAVDADSGHNAWLSYHVVQASEPGLFSLGLRTGEVRMVRALGDKDSVRQRLLVAVRDGGQPPLSATATLHLVFADSLQEVLPDFSDHPTPSDSQAEMQFYLVVALALISVLFLLAVILAIALRLRQSFSPTAGDCFESVLCSKSGPVGPPNYSEGTLPYAYNFCVPGDQMNPEFNFFTSVDHCPATQDNLNKDSMLLASILTPSVEADKKILKQQAPPNTDWRFSQAQRPGTSGSQNGDDTGTWPNNQFDTEMLQAMILASASEAADGSSTLGGGAGTMGLSARYGPQFTLQHVPDYRQNVYIPGSNATLTNAAGKRDGKAPAGGNGNKKKSGKKEKK</sequence>
<name>PCDGJ_HUMAN</name>
<dbReference type="EMBL" id="AF152336">
    <property type="protein sequence ID" value="AAD43730.1"/>
    <property type="molecule type" value="mRNA"/>
</dbReference>
<dbReference type="EMBL" id="AF152523">
    <property type="protein sequence ID" value="AAD43783.1"/>
    <property type="molecule type" value="mRNA"/>
</dbReference>
<dbReference type="EMBL" id="BC051788">
    <property type="protein sequence ID" value="AAH51788.1"/>
    <property type="molecule type" value="mRNA"/>
</dbReference>
<dbReference type="CCDS" id="CCDS47293.1">
    <molecule id="Q9Y5F8-1"/>
</dbReference>
<dbReference type="CCDS" id="CCDS75344.1">
    <molecule id="Q9Y5F8-2"/>
</dbReference>
<dbReference type="RefSeq" id="NP_061750.1">
    <molecule id="Q9Y5F8-1"/>
    <property type="nucleotide sequence ID" value="NM_018927.4"/>
</dbReference>
<dbReference type="RefSeq" id="NP_115272.1">
    <molecule id="Q9Y5F8-2"/>
    <property type="nucleotide sequence ID" value="NM_032101.3"/>
</dbReference>
<dbReference type="SMR" id="Q9Y5F8"/>
<dbReference type="BioGRID" id="121039">
    <property type="interactions" value="5"/>
</dbReference>
<dbReference type="FunCoup" id="Q9Y5F8">
    <property type="interactions" value="4"/>
</dbReference>
<dbReference type="IntAct" id="Q9Y5F8">
    <property type="interactions" value="5"/>
</dbReference>
<dbReference type="STRING" id="9606.ENSP00000381594"/>
<dbReference type="GlyConnect" id="1690">
    <property type="glycosylation" value="4 N-Linked glycans (1 site)"/>
</dbReference>
<dbReference type="GlyCosmos" id="Q9Y5F8">
    <property type="glycosylation" value="2 sites, 3 glycans"/>
</dbReference>
<dbReference type="GlyGen" id="Q9Y5F8">
    <property type="glycosylation" value="4 sites, 3 N-linked glycans (1 site)"/>
</dbReference>
<dbReference type="iPTMnet" id="Q9Y5F8"/>
<dbReference type="PhosphoSitePlus" id="Q9Y5F8"/>
<dbReference type="SwissPalm" id="Q9Y5F8"/>
<dbReference type="BioMuta" id="PCDHGB7"/>
<dbReference type="DMDM" id="37999828"/>
<dbReference type="jPOST" id="Q9Y5F8"/>
<dbReference type="MassIVE" id="Q9Y5F8"/>
<dbReference type="PaxDb" id="9606-ENSP00000381594"/>
<dbReference type="PeptideAtlas" id="Q9Y5F8"/>
<dbReference type="ProteomicsDB" id="86357">
    <molecule id="Q9Y5F8-1"/>
</dbReference>
<dbReference type="ProteomicsDB" id="86358">
    <molecule id="Q9Y5F8-2"/>
</dbReference>
<dbReference type="Antibodypedia" id="56135">
    <property type="antibodies" value="14 antibodies from 5 providers"/>
</dbReference>
<dbReference type="DNASU" id="56099"/>
<dbReference type="Ensembl" id="ENST00000398594.4">
    <molecule id="Q9Y5F8-1"/>
    <property type="protein sequence ID" value="ENSP00000381594.3"/>
    <property type="gene ID" value="ENSG00000254122.3"/>
</dbReference>
<dbReference type="Ensembl" id="ENST00000612073.1">
    <molecule id="Q9Y5F8-2"/>
    <property type="protein sequence ID" value="ENSP00000479132.1"/>
    <property type="gene ID" value="ENSG00000254122.3"/>
</dbReference>
<dbReference type="GeneID" id="56099"/>
<dbReference type="KEGG" id="hsa:56099"/>
<dbReference type="MANE-Select" id="ENST00000398594.4">
    <property type="protein sequence ID" value="ENSP00000381594.3"/>
    <property type="RefSeq nucleotide sequence ID" value="NM_018927.4"/>
    <property type="RefSeq protein sequence ID" value="NP_061750.1"/>
</dbReference>
<dbReference type="UCSC" id="uc003lkm.4">
    <molecule id="Q9Y5F8-1"/>
    <property type="organism name" value="human"/>
</dbReference>
<dbReference type="AGR" id="HGNC:8714"/>
<dbReference type="CTD" id="56099"/>
<dbReference type="DisGeNET" id="56099"/>
<dbReference type="GeneCards" id="PCDHGB7"/>
<dbReference type="HGNC" id="HGNC:8714">
    <property type="gene designation" value="PCDHGB7"/>
</dbReference>
<dbReference type="HPA" id="ENSG00000254122">
    <property type="expression patterns" value="Low tissue specificity"/>
</dbReference>
<dbReference type="MalaCards" id="PCDHGB7"/>
<dbReference type="MIM" id="604968">
    <property type="type" value="gene"/>
</dbReference>
<dbReference type="MIM" id="606304">
    <property type="type" value="gene"/>
</dbReference>
<dbReference type="neXtProt" id="NX_Q9Y5F8"/>
<dbReference type="OpenTargets" id="ENSG00000254122"/>
<dbReference type="PharmGKB" id="PA33062"/>
<dbReference type="VEuPathDB" id="HostDB:ENSG00000254122"/>
<dbReference type="eggNOG" id="KOG3594">
    <property type="taxonomic scope" value="Eukaryota"/>
</dbReference>
<dbReference type="GeneTree" id="ENSGT00940000164848"/>
<dbReference type="HOGENOM" id="CLU_006480_3_0_1"/>
<dbReference type="InParanoid" id="Q9Y5F8"/>
<dbReference type="OMA" id="QFLMINA"/>
<dbReference type="OrthoDB" id="6252479at2759"/>
<dbReference type="PAN-GO" id="Q9Y5F8">
    <property type="GO annotations" value="2 GO annotations based on evolutionary models"/>
</dbReference>
<dbReference type="PhylomeDB" id="Q9Y5F8"/>
<dbReference type="TreeFam" id="TF332299"/>
<dbReference type="PathwayCommons" id="Q9Y5F8"/>
<dbReference type="SIGNOR" id="Q9Y5F8"/>
<dbReference type="BioGRID-ORCS" id="56099">
    <property type="hits" value="9 hits in 1099 CRISPR screens"/>
</dbReference>
<dbReference type="GeneWiki" id="PCDHGB7"/>
<dbReference type="GenomeRNAi" id="56099"/>
<dbReference type="Pharos" id="Q9Y5F8">
    <property type="development level" value="Tdark"/>
</dbReference>
<dbReference type="PRO" id="PR:Q9Y5F8"/>
<dbReference type="Proteomes" id="UP000005640">
    <property type="component" value="Chromosome 5"/>
</dbReference>
<dbReference type="RNAct" id="Q9Y5F8">
    <property type="molecule type" value="protein"/>
</dbReference>
<dbReference type="Bgee" id="ENSG00000254122">
    <property type="expression patterns" value="Expressed in stromal cell of endometrium and 95 other cell types or tissues"/>
</dbReference>
<dbReference type="GO" id="GO:0005886">
    <property type="term" value="C:plasma membrane"/>
    <property type="evidence" value="ECO:0000318"/>
    <property type="project" value="GO_Central"/>
</dbReference>
<dbReference type="GO" id="GO:0005509">
    <property type="term" value="F:calcium ion binding"/>
    <property type="evidence" value="ECO:0007669"/>
    <property type="project" value="InterPro"/>
</dbReference>
<dbReference type="GO" id="GO:0007155">
    <property type="term" value="P:cell adhesion"/>
    <property type="evidence" value="ECO:0000318"/>
    <property type="project" value="GO_Central"/>
</dbReference>
<dbReference type="GO" id="GO:0007156">
    <property type="term" value="P:homophilic cell adhesion via plasma membrane adhesion molecules"/>
    <property type="evidence" value="ECO:0007669"/>
    <property type="project" value="InterPro"/>
</dbReference>
<dbReference type="GO" id="GO:0007399">
    <property type="term" value="P:nervous system development"/>
    <property type="evidence" value="ECO:0007669"/>
    <property type="project" value="UniProtKB-ARBA"/>
</dbReference>
<dbReference type="CDD" id="cd11304">
    <property type="entry name" value="Cadherin_repeat"/>
    <property type="match status" value="6"/>
</dbReference>
<dbReference type="FunFam" id="2.60.40.60:FF:000004">
    <property type="entry name" value="Protocadherin 1 gamma 2"/>
    <property type="match status" value="1"/>
</dbReference>
<dbReference type="FunFam" id="2.60.40.60:FF:000001">
    <property type="entry name" value="Protocadherin alpha 2"/>
    <property type="match status" value="1"/>
</dbReference>
<dbReference type="FunFam" id="2.60.40.60:FF:000002">
    <property type="entry name" value="Protocadherin alpha 2"/>
    <property type="match status" value="1"/>
</dbReference>
<dbReference type="FunFam" id="2.60.40.60:FF:000006">
    <property type="entry name" value="Protocadherin alpha 2"/>
    <property type="match status" value="1"/>
</dbReference>
<dbReference type="FunFam" id="2.60.40.60:FF:000129">
    <property type="entry name" value="protocadherin alpha-C2 isoform X1"/>
    <property type="match status" value="1"/>
</dbReference>
<dbReference type="FunFam" id="2.60.40.60:FF:000018">
    <property type="entry name" value="Protocadherin gamma c3"/>
    <property type="match status" value="1"/>
</dbReference>
<dbReference type="Gene3D" id="2.60.40.60">
    <property type="entry name" value="Cadherins"/>
    <property type="match status" value="6"/>
</dbReference>
<dbReference type="InterPro" id="IPR002126">
    <property type="entry name" value="Cadherin-like_dom"/>
</dbReference>
<dbReference type="InterPro" id="IPR015919">
    <property type="entry name" value="Cadherin-like_sf"/>
</dbReference>
<dbReference type="InterPro" id="IPR032455">
    <property type="entry name" value="Cadherin_C"/>
</dbReference>
<dbReference type="InterPro" id="IPR031904">
    <property type="entry name" value="Cadherin_CBD"/>
</dbReference>
<dbReference type="InterPro" id="IPR020894">
    <property type="entry name" value="Cadherin_CS"/>
</dbReference>
<dbReference type="InterPro" id="IPR013164">
    <property type="entry name" value="Cadherin_N"/>
</dbReference>
<dbReference type="InterPro" id="IPR050174">
    <property type="entry name" value="Protocadherin/Cadherin-CA"/>
</dbReference>
<dbReference type="PANTHER" id="PTHR24028">
    <property type="entry name" value="CADHERIN-87A"/>
    <property type="match status" value="1"/>
</dbReference>
<dbReference type="PANTHER" id="PTHR24028:SF113">
    <property type="entry name" value="PROTOCADHERIN GAMMA-B7"/>
    <property type="match status" value="1"/>
</dbReference>
<dbReference type="Pfam" id="PF00028">
    <property type="entry name" value="Cadherin"/>
    <property type="match status" value="5"/>
</dbReference>
<dbReference type="Pfam" id="PF08266">
    <property type="entry name" value="Cadherin_2"/>
    <property type="match status" value="1"/>
</dbReference>
<dbReference type="Pfam" id="PF16492">
    <property type="entry name" value="Cadherin_C_2"/>
    <property type="match status" value="1"/>
</dbReference>
<dbReference type="Pfam" id="PF15974">
    <property type="entry name" value="Cadherin_tail"/>
    <property type="match status" value="1"/>
</dbReference>
<dbReference type="PRINTS" id="PR00205">
    <property type="entry name" value="CADHERIN"/>
</dbReference>
<dbReference type="SMART" id="SM00112">
    <property type="entry name" value="CA"/>
    <property type="match status" value="6"/>
</dbReference>
<dbReference type="SUPFAM" id="SSF49313">
    <property type="entry name" value="Cadherin-like"/>
    <property type="match status" value="6"/>
</dbReference>
<dbReference type="PROSITE" id="PS00232">
    <property type="entry name" value="CADHERIN_1"/>
    <property type="match status" value="5"/>
</dbReference>
<dbReference type="PROSITE" id="PS50268">
    <property type="entry name" value="CADHERIN_2"/>
    <property type="match status" value="6"/>
</dbReference>
<evidence type="ECO:0000250" key="1"/>
<evidence type="ECO:0000255" key="2"/>
<evidence type="ECO:0000255" key="3">
    <source>
        <dbReference type="PROSITE-ProRule" id="PRU00043"/>
    </source>
</evidence>
<evidence type="ECO:0000256" key="4">
    <source>
        <dbReference type="SAM" id="MobiDB-lite"/>
    </source>
</evidence>
<evidence type="ECO:0000303" key="5">
    <source>
    </source>
</evidence>
<protein>
    <recommendedName>
        <fullName>Protocadherin gamma-B7</fullName>
        <shortName>PCDH-gamma-B7</shortName>
    </recommendedName>
</protein>
<gene>
    <name type="primary">PCDHGB7</name>
</gene>